<feature type="chain" id="PRO_0000181281" description="Epithelial sodium channel subunit gamma-2">
    <location>
        <begin position="1"/>
        <end position="663"/>
    </location>
</feature>
<feature type="topological domain" description="Cytoplasmic" evidence="1">
    <location>
        <begin position="1"/>
        <end position="55"/>
    </location>
</feature>
<feature type="transmembrane region" description="Helical; Name=1" evidence="2">
    <location>
        <begin position="56"/>
        <end position="76"/>
    </location>
</feature>
<feature type="topological domain" description="Extracellular" evidence="1">
    <location>
        <begin position="77"/>
        <end position="544"/>
    </location>
</feature>
<feature type="transmembrane region" description="Helical; Name=2" evidence="2">
    <location>
        <begin position="545"/>
        <end position="565"/>
    </location>
</feature>
<feature type="topological domain" description="Cytoplasmic" evidence="1">
    <location>
        <begin position="566"/>
        <end position="663"/>
    </location>
</feature>
<feature type="disulfide bond" evidence="1">
    <location>
        <begin position="101"/>
        <end position="286"/>
    </location>
</feature>
<feature type="disulfide bond" evidence="1">
    <location>
        <begin position="209"/>
        <end position="217"/>
    </location>
</feature>
<feature type="disulfide bond" evidence="1">
    <location>
        <begin position="263"/>
        <end position="270"/>
    </location>
</feature>
<feature type="disulfide bond" evidence="1">
    <location>
        <begin position="375"/>
        <end position="460"/>
    </location>
</feature>
<feature type="disulfide bond" evidence="1">
    <location>
        <begin position="397"/>
        <end position="456"/>
    </location>
</feature>
<feature type="disulfide bond" evidence="1">
    <location>
        <begin position="401"/>
        <end position="452"/>
    </location>
</feature>
<feature type="disulfide bond" evidence="1">
    <location>
        <begin position="410"/>
        <end position="437"/>
    </location>
</feature>
<feature type="disulfide bond" evidence="1">
    <location>
        <begin position="412"/>
        <end position="426"/>
    </location>
</feature>
<comment type="function">
    <text evidence="3">This is one of the three pore-forming subunits of the heterotrimeric epithelial sodium channel (ENaC), a critical regulator of sodium balance and fluid homeostasis. ENaC operates in epithelial tissues, where it mediates the electrodiffusion of sodium ions from extracellular fluid through the apical membrane of cells, with water following osmotically.</text>
</comment>
<comment type="catalytic activity">
    <reaction evidence="3">
        <text>Na(+)(in) = Na(+)(out)</text>
        <dbReference type="Rhea" id="RHEA:34963"/>
        <dbReference type="ChEBI" id="CHEBI:29101"/>
    </reaction>
</comment>
<comment type="activity regulation">
    <text evidence="3">Originally identified and characterized by its inhibition by the diuretic drug amiloride.</text>
</comment>
<comment type="subunit">
    <text evidence="3">Component of the heterotrimeric epithelial sodium channel (ENaC) composed of an alpha/SCNN1A, a beta/SCNN1B and a gamma/SCNN1G subunit.</text>
</comment>
<comment type="subcellular location">
    <subcellularLocation>
        <location evidence="5">Apical cell membrane</location>
        <topology evidence="1">Multi-pass membrane protein</topology>
    </subcellularLocation>
</comment>
<comment type="similarity">
    <text evidence="4">Belongs to the amiloride-sensitive sodium channel (TC 1.A.6) family. SCNN1G subfamily.</text>
</comment>
<protein>
    <recommendedName>
        <fullName evidence="5">Epithelial sodium channel subunit gamma-2</fullName>
    </recommendedName>
    <alternativeName>
        <fullName evidence="5">Amiloride-sensitive sodium channel subunit gamma-2</fullName>
    </alternativeName>
</protein>
<name>SCNNH_XENLA</name>
<evidence type="ECO:0000250" key="1">
    <source>
        <dbReference type="UniProtKB" id="P51170"/>
    </source>
</evidence>
<evidence type="ECO:0000255" key="2"/>
<evidence type="ECO:0000269" key="3">
    <source>
    </source>
</evidence>
<evidence type="ECO:0000305" key="4"/>
<evidence type="ECO:0000305" key="5">
    <source>
    </source>
</evidence>
<sequence length="663" mass="75881">MSNSGKKLTQKLKKNLPVTGPQAPTLYELMQWYCLNTNTHGCRRIVVSKGRLRRWIWIVLTLIAVALIFWQCALLLMTYYSVSASITVTFQKLVYPAVTICNLNPYSYSKIKDRLATLEKTTNQTLKKIYGFTEPLIRSKRDLDVNDENSTEDIFLKQIPLFRLESIKGNQLVVSDLKTKKRTQISGKVIQRDAGSVQDSDNMVGFKLCDANNSSDCTIFTFGSGVNAIQEWYRLHYNNILAKISMEDKIAMGYKADELIVTCLFDGLSCDARNFTLFHHPLYGNCYTFNSAERGNLLVSSMGGAEYGLKVVLYIDEDEYNPYLSTAAGAKILVHDQDEYPFIEDLGTELETGTETSIGMQLTESTKLSDPYSDCTIDGSDISVENLYNKKYTLQICLNSCFQREMVRSCGCAHYDQPLPNGAKYCNYEEYPNWIYCYVKLYKQFVQEELGCQSTCRESCSFKEWTLTRSLAKWPSLNSEEWMLRVLSWELGEKLNKNLTKNDLGNLNIFYQDLNSRSISESPTYNIVTLLSNFGGQLGLWMSCSMVCGLEIVEVFFIDSFWVILRQKWHKLCNWWKNRKENEIEEIPDITVPAMAGHNNPLCVDHPICLGEDDPPTFHSALQLPQAQDCRVPRTPPPKYNTLRIQSAFHLETIDSDEDVERF</sequence>
<reference key="1">
    <citation type="journal article" date="1997" name="Proc. Natl. Acad. Sci. U.S.A.">
        <title>Novel isoforms of the beta and gamma subunits of the Xenopus epithelial Na channel provide information about the amiloride binding site and extracellular sodium sensing.</title>
        <authorList>
            <person name="Puoti A."/>
            <person name="May A."/>
            <person name="Rossier B.C."/>
            <person name="Horisberger J.-D."/>
        </authorList>
    </citation>
    <scope>NUCLEOTIDE SEQUENCE [MRNA]</scope>
    <scope>FUNCTION</scope>
    <scope>TRANSPORTER ACTIVITY</scope>
    <scope>ACTIVITY REGULATION</scope>
    <scope>SUBUNIT</scope>
    <scope>SUBCELLULAR LOCATION</scope>
</reference>
<gene>
    <name type="primary">scnn1g-b</name>
</gene>
<keyword id="KW-1003">Cell membrane</keyword>
<keyword id="KW-1015">Disulfide bond</keyword>
<keyword id="KW-0407">Ion channel</keyword>
<keyword id="KW-0406">Ion transport</keyword>
<keyword id="KW-0472">Membrane</keyword>
<keyword id="KW-1185">Reference proteome</keyword>
<keyword id="KW-0915">Sodium</keyword>
<keyword id="KW-0894">Sodium channel</keyword>
<keyword id="KW-0739">Sodium transport</keyword>
<keyword id="KW-0812">Transmembrane</keyword>
<keyword id="KW-1133">Transmembrane helix</keyword>
<keyword id="KW-0813">Transport</keyword>
<proteinExistence type="evidence at protein level"/>
<organism>
    <name type="scientific">Xenopus laevis</name>
    <name type="common">African clawed frog</name>
    <dbReference type="NCBI Taxonomy" id="8355"/>
    <lineage>
        <taxon>Eukaryota</taxon>
        <taxon>Metazoa</taxon>
        <taxon>Chordata</taxon>
        <taxon>Craniata</taxon>
        <taxon>Vertebrata</taxon>
        <taxon>Euteleostomi</taxon>
        <taxon>Amphibia</taxon>
        <taxon>Batrachia</taxon>
        <taxon>Anura</taxon>
        <taxon>Pipoidea</taxon>
        <taxon>Pipidae</taxon>
        <taxon>Xenopodinae</taxon>
        <taxon>Xenopus</taxon>
        <taxon>Xenopus</taxon>
    </lineage>
</organism>
<accession>O13263</accession>
<dbReference type="EMBL" id="Y12001">
    <property type="protein sequence ID" value="CAA72730.1"/>
    <property type="molecule type" value="mRNA"/>
</dbReference>
<dbReference type="RefSeq" id="NP_001079131.1">
    <property type="nucleotide sequence ID" value="NM_001085662.1"/>
</dbReference>
<dbReference type="SMR" id="O13263"/>
<dbReference type="GeneID" id="373668"/>
<dbReference type="KEGG" id="xla:373668"/>
<dbReference type="AGR" id="Xenbase:XB-GENE-6252871"/>
<dbReference type="CTD" id="373668"/>
<dbReference type="Xenbase" id="XB-GENE-6252871">
    <property type="gene designation" value="scnn1g.S"/>
</dbReference>
<dbReference type="OrthoDB" id="6021021at2759"/>
<dbReference type="Proteomes" id="UP000186698">
    <property type="component" value="Chromosome 9_10S"/>
</dbReference>
<dbReference type="Bgee" id="373668">
    <property type="expression patterns" value="Expressed in egg cell and 8 other cell types or tissues"/>
</dbReference>
<dbReference type="GO" id="GO:0016324">
    <property type="term" value="C:apical plasma membrane"/>
    <property type="evidence" value="ECO:0007669"/>
    <property type="project" value="UniProtKB-SubCell"/>
</dbReference>
<dbReference type="GO" id="GO:0005886">
    <property type="term" value="C:plasma membrane"/>
    <property type="evidence" value="ECO:0000318"/>
    <property type="project" value="GO_Central"/>
</dbReference>
<dbReference type="GO" id="GO:0015280">
    <property type="term" value="F:ligand-gated sodium channel activity"/>
    <property type="evidence" value="ECO:0000318"/>
    <property type="project" value="GO_Central"/>
</dbReference>
<dbReference type="GO" id="GO:0035725">
    <property type="term" value="P:sodium ion transmembrane transport"/>
    <property type="evidence" value="ECO:0000250"/>
    <property type="project" value="UniProtKB"/>
</dbReference>
<dbReference type="FunFam" id="1.10.287.770:FF:000005">
    <property type="entry name" value="Amiloride-sensitive sodium channel subunit gamma"/>
    <property type="match status" value="1"/>
</dbReference>
<dbReference type="FunFam" id="2.60.470.10:FF:000005">
    <property type="entry name" value="Amiloride-sensitive sodium channel subunit gamma"/>
    <property type="match status" value="1"/>
</dbReference>
<dbReference type="Gene3D" id="2.60.470.10">
    <property type="entry name" value="Acid-sensing ion channels like domains"/>
    <property type="match status" value="1"/>
</dbReference>
<dbReference type="Gene3D" id="1.10.287.770">
    <property type="entry name" value="YojJ-like"/>
    <property type="match status" value="1"/>
</dbReference>
<dbReference type="InterPro" id="IPR001873">
    <property type="entry name" value="ENaC"/>
</dbReference>
<dbReference type="InterPro" id="IPR004724">
    <property type="entry name" value="ENaC_chordates"/>
</dbReference>
<dbReference type="InterPro" id="IPR020903">
    <property type="entry name" value="ENaC_CS"/>
</dbReference>
<dbReference type="NCBIfam" id="TIGR00859">
    <property type="entry name" value="ENaC"/>
    <property type="match status" value="1"/>
</dbReference>
<dbReference type="PANTHER" id="PTHR11690:SF19">
    <property type="entry name" value="AMILORIDE-SENSITIVE SODIUM CHANNEL SUBUNIT GAMMA"/>
    <property type="match status" value="1"/>
</dbReference>
<dbReference type="PANTHER" id="PTHR11690">
    <property type="entry name" value="AMILORIDE-SENSITIVE SODIUM CHANNEL-RELATED"/>
    <property type="match status" value="1"/>
</dbReference>
<dbReference type="Pfam" id="PF00858">
    <property type="entry name" value="ASC"/>
    <property type="match status" value="1"/>
</dbReference>
<dbReference type="PRINTS" id="PR01078">
    <property type="entry name" value="AMINACHANNEL"/>
</dbReference>
<dbReference type="PROSITE" id="PS01206">
    <property type="entry name" value="ASC"/>
    <property type="match status" value="1"/>
</dbReference>